<sequence>MTQKAKNTIYLLILIILSMLCLVYASVPLYSIFCKVTGYGGTVRTATATQSKLGKTTIKIRFNADINKELPWKFYPEIPYTTVKPGEQKLIFYRAENLTNEYVSGMAVYNVTPYKVGKYFNKVACFCFTKQTLSPYQKTIMPVSFFIDPNIETDPETSDVKLITLSYTFFKYKENTK</sequence>
<feature type="chain" id="PRO_0000246137" description="Cytochrome c oxidase assembly protein CtaG">
    <location>
        <begin position="1"/>
        <end position="177"/>
    </location>
</feature>
<feature type="topological domain" description="Cytoplasmic" evidence="1">
    <location>
        <begin position="1"/>
        <end position="8"/>
    </location>
</feature>
<feature type="transmembrane region" description="Helical; Signal-anchor for type II membrane protein" evidence="1">
    <location>
        <begin position="9"/>
        <end position="29"/>
    </location>
</feature>
<feature type="topological domain" description="Periplasmic" evidence="1">
    <location>
        <begin position="30"/>
        <end position="177"/>
    </location>
</feature>
<organism>
    <name type="scientific">Ehrlichia ruminantium (strain Welgevonden)</name>
    <dbReference type="NCBI Taxonomy" id="254945"/>
    <lineage>
        <taxon>Bacteria</taxon>
        <taxon>Pseudomonadati</taxon>
        <taxon>Pseudomonadota</taxon>
        <taxon>Alphaproteobacteria</taxon>
        <taxon>Rickettsiales</taxon>
        <taxon>Anaplasmataceae</taxon>
        <taxon>Ehrlichia</taxon>
    </lineage>
</organism>
<keyword id="KW-0997">Cell inner membrane</keyword>
<keyword id="KW-1003">Cell membrane</keyword>
<keyword id="KW-0186">Copper</keyword>
<keyword id="KW-0472">Membrane</keyword>
<keyword id="KW-0735">Signal-anchor</keyword>
<keyword id="KW-0812">Transmembrane</keyword>
<keyword id="KW-1133">Transmembrane helix</keyword>
<accession>Q5HA73</accession>
<accession>Q5FDZ9</accession>
<name>COXZ_EHRRW</name>
<dbReference type="EMBL" id="CR767821">
    <property type="protein sequence ID" value="CAH58542.1"/>
    <property type="molecule type" value="Genomic_DNA"/>
</dbReference>
<dbReference type="EMBL" id="CR925678">
    <property type="protein sequence ID" value="CAI27349.1"/>
    <property type="molecule type" value="Genomic_DNA"/>
</dbReference>
<dbReference type="RefSeq" id="WP_011155487.1">
    <property type="nucleotide sequence ID" value="NC_005295.2"/>
</dbReference>
<dbReference type="SMR" id="Q5HA73"/>
<dbReference type="GeneID" id="33057565"/>
<dbReference type="KEGG" id="eru:Erum8080"/>
<dbReference type="KEGG" id="erw:ERWE_CDS_08550"/>
<dbReference type="eggNOG" id="COG3175">
    <property type="taxonomic scope" value="Bacteria"/>
</dbReference>
<dbReference type="HOGENOM" id="CLU_045000_5_0_5"/>
<dbReference type="Proteomes" id="UP000001021">
    <property type="component" value="Chromosome"/>
</dbReference>
<dbReference type="GO" id="GO:0005886">
    <property type="term" value="C:plasma membrane"/>
    <property type="evidence" value="ECO:0007669"/>
    <property type="project" value="UniProtKB-SubCell"/>
</dbReference>
<dbReference type="GO" id="GO:0005507">
    <property type="term" value="F:copper ion binding"/>
    <property type="evidence" value="ECO:0007669"/>
    <property type="project" value="InterPro"/>
</dbReference>
<dbReference type="GO" id="GO:0008535">
    <property type="term" value="P:respiratory chain complex IV assembly"/>
    <property type="evidence" value="ECO:0007669"/>
    <property type="project" value="UniProtKB-UniRule"/>
</dbReference>
<dbReference type="FunFam" id="2.60.370.10:FF:000001">
    <property type="entry name" value="COX11 cytochrome c oxidase assembly homolog"/>
    <property type="match status" value="1"/>
</dbReference>
<dbReference type="Gene3D" id="2.60.370.10">
    <property type="entry name" value="Ctag/Cox11"/>
    <property type="match status" value="1"/>
</dbReference>
<dbReference type="HAMAP" id="MF_00155">
    <property type="entry name" value="CtaG"/>
    <property type="match status" value="1"/>
</dbReference>
<dbReference type="InterPro" id="IPR023471">
    <property type="entry name" value="CtaG/Cox11_dom_sf"/>
</dbReference>
<dbReference type="InterPro" id="IPR007533">
    <property type="entry name" value="Cyt_c_oxidase_assmbl_CtaG"/>
</dbReference>
<dbReference type="NCBIfam" id="NF003465">
    <property type="entry name" value="PRK05089.1"/>
    <property type="match status" value="1"/>
</dbReference>
<dbReference type="PANTHER" id="PTHR21320:SF3">
    <property type="entry name" value="CYTOCHROME C OXIDASE ASSEMBLY PROTEIN COX11, MITOCHONDRIAL-RELATED"/>
    <property type="match status" value="1"/>
</dbReference>
<dbReference type="PANTHER" id="PTHR21320">
    <property type="entry name" value="CYTOCHROME C OXIDASE ASSEMBLY PROTEIN COX11-RELATED"/>
    <property type="match status" value="1"/>
</dbReference>
<dbReference type="Pfam" id="PF04442">
    <property type="entry name" value="CtaG_Cox11"/>
    <property type="match status" value="1"/>
</dbReference>
<dbReference type="PIRSF" id="PIRSF005413">
    <property type="entry name" value="COX11"/>
    <property type="match status" value="1"/>
</dbReference>
<dbReference type="SUPFAM" id="SSF110111">
    <property type="entry name" value="Ctag/Cox11"/>
    <property type="match status" value="1"/>
</dbReference>
<evidence type="ECO:0000255" key="1">
    <source>
        <dbReference type="HAMAP-Rule" id="MF_00155"/>
    </source>
</evidence>
<reference key="1">
    <citation type="journal article" date="2005" name="Proc. Natl. Acad. Sci. U.S.A.">
        <title>The genome of the heartwater agent Ehrlichia ruminantium contains multiple tandem repeats of actively variable copy number.</title>
        <authorList>
            <person name="Collins N.E."/>
            <person name="Liebenberg J."/>
            <person name="de Villiers E.P."/>
            <person name="Brayton K.A."/>
            <person name="Louw E."/>
            <person name="Pretorius A."/>
            <person name="Faber F.E."/>
            <person name="van Heerden H."/>
            <person name="Josemans A."/>
            <person name="van Kleef M."/>
            <person name="Steyn H.C."/>
            <person name="van Strijp M.F."/>
            <person name="Zweygarth E."/>
            <person name="Jongejan F."/>
            <person name="Maillard J.C."/>
            <person name="Berthier D."/>
            <person name="Botha M."/>
            <person name="Joubert F."/>
            <person name="Corton C.H."/>
            <person name="Thomson N.R."/>
            <person name="Allsopp M.T."/>
            <person name="Allsopp B.A."/>
        </authorList>
    </citation>
    <scope>NUCLEOTIDE SEQUENCE [LARGE SCALE GENOMIC DNA]</scope>
    <source>
        <strain>Welgevonden</strain>
    </source>
</reference>
<reference key="2">
    <citation type="journal article" date="2006" name="J. Bacteriol.">
        <title>Comparative genomic analysis of three strains of Ehrlichia ruminantium reveals an active process of genome size plasticity.</title>
        <authorList>
            <person name="Frutos R."/>
            <person name="Viari A."/>
            <person name="Ferraz C."/>
            <person name="Morgat A."/>
            <person name="Eychenie S."/>
            <person name="Kandassamy Y."/>
            <person name="Chantal I."/>
            <person name="Bensaid A."/>
            <person name="Coissac E."/>
            <person name="Vachiery N."/>
            <person name="Demaille J."/>
            <person name="Martinez D."/>
        </authorList>
    </citation>
    <scope>NUCLEOTIDE SEQUENCE [LARGE SCALE GENOMIC DNA]</scope>
    <source>
        <strain>Welgevonden</strain>
    </source>
</reference>
<proteinExistence type="inferred from homology"/>
<protein>
    <recommendedName>
        <fullName evidence="1">Cytochrome c oxidase assembly protein CtaG</fullName>
    </recommendedName>
</protein>
<comment type="function">
    <text evidence="1">Exerts its effect at some terminal stage of cytochrome c oxidase synthesis, probably by being involved in the insertion of the copper B into subunit I.</text>
</comment>
<comment type="subcellular location">
    <subcellularLocation>
        <location evidence="1">Cell inner membrane</location>
        <topology evidence="1">Single-pass type II membrane protein</topology>
        <orientation evidence="1">Periplasmic side</orientation>
    </subcellularLocation>
</comment>
<comment type="similarity">
    <text evidence="1">Belongs to the COX11/CtaG family.</text>
</comment>
<gene>
    <name evidence="1" type="primary">ctaG</name>
    <name type="ordered locus">Erum8080</name>
    <name type="ordered locus">ERWE_CDS_08550</name>
</gene>